<organism>
    <name type="scientific">Bos taurus</name>
    <name type="common">Bovine</name>
    <dbReference type="NCBI Taxonomy" id="9913"/>
    <lineage>
        <taxon>Eukaryota</taxon>
        <taxon>Metazoa</taxon>
        <taxon>Chordata</taxon>
        <taxon>Craniata</taxon>
        <taxon>Vertebrata</taxon>
        <taxon>Euteleostomi</taxon>
        <taxon>Mammalia</taxon>
        <taxon>Eutheria</taxon>
        <taxon>Laurasiatheria</taxon>
        <taxon>Artiodactyla</taxon>
        <taxon>Ruminantia</taxon>
        <taxon>Pecora</taxon>
        <taxon>Bovidae</taxon>
        <taxon>Bovinae</taxon>
        <taxon>Bos</taxon>
    </lineage>
</organism>
<reference key="1">
    <citation type="submission" date="2005-09" db="EMBL/GenBank/DDBJ databases">
        <authorList>
            <consortium name="NIH - Mammalian Gene Collection (MGC) project"/>
        </authorList>
    </citation>
    <scope>NUCLEOTIDE SEQUENCE [LARGE SCALE MRNA]</scope>
    <source>
        <strain>Hereford</strain>
        <tissue>Ascending colon</tissue>
    </source>
</reference>
<keyword id="KW-0325">Glycoprotein</keyword>
<keyword id="KW-0472">Membrane</keyword>
<keyword id="KW-1185">Reference proteome</keyword>
<keyword id="KW-0732">Signal</keyword>
<keyword id="KW-0812">Transmembrane</keyword>
<keyword id="KW-1133">Transmembrane helix</keyword>
<gene>
    <name type="primary">LRRN4CL</name>
</gene>
<dbReference type="EMBL" id="BC104601">
    <property type="protein sequence ID" value="AAI04602.1"/>
    <property type="status" value="ALT_INIT"/>
    <property type="molecule type" value="mRNA"/>
</dbReference>
<dbReference type="RefSeq" id="NP_001181998.1">
    <property type="nucleotide sequence ID" value="NM_001195069.1"/>
</dbReference>
<dbReference type="SMR" id="Q3SWY4"/>
<dbReference type="FunCoup" id="Q3SWY4">
    <property type="interactions" value="101"/>
</dbReference>
<dbReference type="STRING" id="9913.ENSBTAP00000013854"/>
<dbReference type="GlyCosmos" id="Q3SWY4">
    <property type="glycosylation" value="1 site, No reported glycans"/>
</dbReference>
<dbReference type="GlyGen" id="Q3SWY4">
    <property type="glycosylation" value="1 site"/>
</dbReference>
<dbReference type="PaxDb" id="9913-ENSBTAP00000013854"/>
<dbReference type="Ensembl" id="ENSBTAT00000013854.7">
    <property type="protein sequence ID" value="ENSBTAP00000013854.5"/>
    <property type="gene ID" value="ENSBTAG00000010484.7"/>
</dbReference>
<dbReference type="GeneID" id="788567"/>
<dbReference type="KEGG" id="bta:788567"/>
<dbReference type="CTD" id="221091"/>
<dbReference type="VEuPathDB" id="HostDB:ENSBTAG00000010484"/>
<dbReference type="VGNC" id="VGNC:31042">
    <property type="gene designation" value="LRRN4CL"/>
</dbReference>
<dbReference type="eggNOG" id="ENOG502S59T">
    <property type="taxonomic scope" value="Eukaryota"/>
</dbReference>
<dbReference type="GeneTree" id="ENSGT00940000162696"/>
<dbReference type="HOGENOM" id="CLU_093350_0_0_1"/>
<dbReference type="InParanoid" id="Q3SWY4"/>
<dbReference type="OMA" id="SCSALVW"/>
<dbReference type="OrthoDB" id="8824963at2759"/>
<dbReference type="Proteomes" id="UP000009136">
    <property type="component" value="Chromosome 29"/>
</dbReference>
<dbReference type="Bgee" id="ENSBTAG00000010484">
    <property type="expression patterns" value="Expressed in temporal cortex and 105 other cell types or tissues"/>
</dbReference>
<dbReference type="GO" id="GO:0016020">
    <property type="term" value="C:membrane"/>
    <property type="evidence" value="ECO:0007669"/>
    <property type="project" value="UniProtKB-SubCell"/>
</dbReference>
<dbReference type="CDD" id="cd00063">
    <property type="entry name" value="FN3"/>
    <property type="match status" value="1"/>
</dbReference>
<dbReference type="Gene3D" id="2.60.40.10">
    <property type="entry name" value="Immunoglobulins"/>
    <property type="match status" value="1"/>
</dbReference>
<dbReference type="InterPro" id="IPR003961">
    <property type="entry name" value="FN3_dom"/>
</dbReference>
<dbReference type="InterPro" id="IPR036116">
    <property type="entry name" value="FN3_sf"/>
</dbReference>
<dbReference type="InterPro" id="IPR013783">
    <property type="entry name" value="Ig-like_fold"/>
</dbReference>
<dbReference type="Pfam" id="PF00041">
    <property type="entry name" value="fn3"/>
    <property type="match status" value="1"/>
</dbReference>
<dbReference type="SMART" id="SM00060">
    <property type="entry name" value="FN3"/>
    <property type="match status" value="1"/>
</dbReference>
<dbReference type="SUPFAM" id="SSF49265">
    <property type="entry name" value="Fibronectin type III"/>
    <property type="match status" value="1"/>
</dbReference>
<dbReference type="PROSITE" id="PS50853">
    <property type="entry name" value="FN3"/>
    <property type="match status" value="1"/>
</dbReference>
<protein>
    <recommendedName>
        <fullName>LRRN4 C-terminal-like protein</fullName>
    </recommendedName>
</protein>
<proteinExistence type="evidence at transcript level"/>
<feature type="signal peptide" evidence="1">
    <location>
        <begin position="1"/>
        <end position="22"/>
    </location>
</feature>
<feature type="chain" id="PRO_0000317751" description="LRRN4 C-terminal-like protein">
    <location>
        <begin position="23"/>
        <end position="232"/>
    </location>
</feature>
<feature type="topological domain" description="Extracellular" evidence="1">
    <location>
        <begin position="23"/>
        <end position="189"/>
    </location>
</feature>
<feature type="transmembrane region" description="Helical" evidence="1">
    <location>
        <begin position="190"/>
        <end position="210"/>
    </location>
</feature>
<feature type="topological domain" description="Cytoplasmic" evidence="1">
    <location>
        <begin position="211"/>
        <end position="232"/>
    </location>
</feature>
<feature type="domain" description="Fibronectin type-III" evidence="2">
    <location>
        <begin position="77"/>
        <end position="172"/>
    </location>
</feature>
<feature type="glycosylation site" description="N-linked (GlcNAc...) asparagine" evidence="1">
    <location>
        <position position="127"/>
    </location>
</feature>
<accession>Q3SWY4</accession>
<comment type="subcellular location">
    <subcellularLocation>
        <location evidence="3">Membrane</location>
        <topology evidence="3">Single-pass type I membrane protein</topology>
    </subcellularLocation>
</comment>
<comment type="sequence caution" evidence="3">
    <conflict type="erroneous initiation">
        <sequence resource="EMBL-CDS" id="AAI04602"/>
    </conflict>
</comment>
<sequence>MPHSPCLLWLLAVTSLVPGTQPLVAGDLEGDELDETPLPAVPCDYDHCRHLQVPCQELQRAGPAACLCPGLSSALQPPHPPRLGEVRVEADMGRAEVHWCAPSSPVNQYWLLLWEGGGAPQKGPSFNSTVRRAELKGLNPGGAYVVCVVAANDAGESRAPGPGAEGLDSADGPNLGPCGRLTVPPRPLTLLHAAMGVGSALALLSCSALVWHFCLRQRWGCPRRGRPSHAGL</sequence>
<evidence type="ECO:0000255" key="1"/>
<evidence type="ECO:0000255" key="2">
    <source>
        <dbReference type="PROSITE-ProRule" id="PRU00316"/>
    </source>
</evidence>
<evidence type="ECO:0000305" key="3"/>
<name>LRN4L_BOVIN</name>